<evidence type="ECO:0000255" key="1">
    <source>
        <dbReference type="HAMAP-Rule" id="MF_00505"/>
    </source>
</evidence>
<organism>
    <name type="scientific">Bacillus velezensis (strain DSM 23117 / BGSC 10A6 / LMG 26770 / FZB42)</name>
    <name type="common">Bacillus amyloliquefaciens subsp. plantarum</name>
    <dbReference type="NCBI Taxonomy" id="326423"/>
    <lineage>
        <taxon>Bacteria</taxon>
        <taxon>Bacillati</taxon>
        <taxon>Bacillota</taxon>
        <taxon>Bacilli</taxon>
        <taxon>Bacillales</taxon>
        <taxon>Bacillaceae</taxon>
        <taxon>Bacillus</taxon>
        <taxon>Bacillus amyloliquefaciens group</taxon>
    </lineage>
</organism>
<gene>
    <name evidence="1" type="primary">htpG</name>
    <name type="ordered locus">RBAM_036820</name>
</gene>
<proteinExistence type="inferred from homology"/>
<reference key="1">
    <citation type="journal article" date="2007" name="Nat. Biotechnol.">
        <title>Comparative analysis of the complete genome sequence of the plant growth-promoting bacterium Bacillus amyloliquefaciens FZB42.</title>
        <authorList>
            <person name="Chen X.H."/>
            <person name="Koumoutsi A."/>
            <person name="Scholz R."/>
            <person name="Eisenreich A."/>
            <person name="Schneider K."/>
            <person name="Heinemeyer I."/>
            <person name="Morgenstern B."/>
            <person name="Voss B."/>
            <person name="Hess W.R."/>
            <person name="Reva O."/>
            <person name="Junge H."/>
            <person name="Voigt B."/>
            <person name="Jungblut P.R."/>
            <person name="Vater J."/>
            <person name="Suessmuth R."/>
            <person name="Liesegang H."/>
            <person name="Strittmatter A."/>
            <person name="Gottschalk G."/>
            <person name="Borriss R."/>
        </authorList>
    </citation>
    <scope>NUCLEOTIDE SEQUENCE [LARGE SCALE GENOMIC DNA]</scope>
    <source>
        <strain>DSM 23117 / BGSC 10A6 / LMG 26770 / FZB42</strain>
    </source>
</reference>
<feature type="chain" id="PRO_1000014896" description="Chaperone protein HtpG">
    <location>
        <begin position="1"/>
        <end position="626"/>
    </location>
</feature>
<feature type="region of interest" description="A; substrate-binding" evidence="1">
    <location>
        <begin position="1"/>
        <end position="341"/>
    </location>
</feature>
<feature type="region of interest" description="B" evidence="1">
    <location>
        <begin position="342"/>
        <end position="552"/>
    </location>
</feature>
<feature type="region of interest" description="C" evidence="1">
    <location>
        <begin position="553"/>
        <end position="626"/>
    </location>
</feature>
<keyword id="KW-0067">ATP-binding</keyword>
<keyword id="KW-0143">Chaperone</keyword>
<keyword id="KW-0963">Cytoplasm</keyword>
<keyword id="KW-0547">Nucleotide-binding</keyword>
<keyword id="KW-0346">Stress response</keyword>
<accession>A7ZAI5</accession>
<sequence length="626" mass="72263">MRKKKFKAESKRLLDMMINSIYTQKEIFLRELISNASDAIDKIYYKALTDDSLTFDQDNYYIKVTADKEARTLTVTDTGIGMTKDELEQHLGTIAKSGSLAFKQENDSKDGHDIIGQFGVGFYAAFMVADKVTVKSKALGSDEAYVWESEGAAGYTIAPCDKETIGTEITLKIKENTEDESYDEFLENYRIKAIVKKYSDFIRYPIKMEETVNKPKEGSENEFEEVQEEQTVNSMVPIWRKNKSELTDEDYEAFYAEKHYGFDKPLTHVHISVDGAVRYNSILFIPENMPFDYYTKEFEKGLELYSNGVLIMNKCADLLPDHFSFVKGMVDSEDLSLNISREMLQHDRQLKLIAKNINKKIKAELKSLLKNKREKYESFYESFGRQLKFGVYNDFGANKDVLKDLLLFYSSKEKKLVTLDEYVSRMPEDQKYIYYASGDSYERIEKLPQTEMVADKGYEILYFTEDIDEFAIKMLTSYEEKEFKSVSSADLGIDSDEDEKQTEAEENEYKDLFESMKEILADKVKNVRASKRLKSHPVCFATDGEVTIEMEKVLNAMPDSQQVKAEKVLEINPNHEVFETLKNAHGQDREKLALYTNLLYNQALLIEGLPIHDPVEFTNDICKVMV</sequence>
<protein>
    <recommendedName>
        <fullName evidence="1">Chaperone protein HtpG</fullName>
    </recommendedName>
    <alternativeName>
        <fullName evidence="1">Heat shock protein HtpG</fullName>
    </alternativeName>
    <alternativeName>
        <fullName evidence="1">High temperature protein G</fullName>
    </alternativeName>
</protein>
<dbReference type="EMBL" id="CP000560">
    <property type="protein sequence ID" value="ABS76011.1"/>
    <property type="molecule type" value="Genomic_DNA"/>
</dbReference>
<dbReference type="RefSeq" id="WP_012118849.1">
    <property type="nucleotide sequence ID" value="NC_009725.2"/>
</dbReference>
<dbReference type="SMR" id="A7ZAI5"/>
<dbReference type="GeneID" id="93082821"/>
<dbReference type="KEGG" id="bay:RBAM_036820"/>
<dbReference type="HOGENOM" id="CLU_006684_3_0_9"/>
<dbReference type="Proteomes" id="UP000001120">
    <property type="component" value="Chromosome"/>
</dbReference>
<dbReference type="GO" id="GO:0005737">
    <property type="term" value="C:cytoplasm"/>
    <property type="evidence" value="ECO:0007669"/>
    <property type="project" value="UniProtKB-SubCell"/>
</dbReference>
<dbReference type="GO" id="GO:0005524">
    <property type="term" value="F:ATP binding"/>
    <property type="evidence" value="ECO:0007669"/>
    <property type="project" value="UniProtKB-UniRule"/>
</dbReference>
<dbReference type="GO" id="GO:0016887">
    <property type="term" value="F:ATP hydrolysis activity"/>
    <property type="evidence" value="ECO:0007669"/>
    <property type="project" value="InterPro"/>
</dbReference>
<dbReference type="GO" id="GO:0140662">
    <property type="term" value="F:ATP-dependent protein folding chaperone"/>
    <property type="evidence" value="ECO:0007669"/>
    <property type="project" value="InterPro"/>
</dbReference>
<dbReference type="GO" id="GO:0051082">
    <property type="term" value="F:unfolded protein binding"/>
    <property type="evidence" value="ECO:0007669"/>
    <property type="project" value="UniProtKB-UniRule"/>
</dbReference>
<dbReference type="CDD" id="cd16927">
    <property type="entry name" value="HATPase_Hsp90-like"/>
    <property type="match status" value="1"/>
</dbReference>
<dbReference type="FunFam" id="1.20.120.790:FF:000006">
    <property type="entry name" value="Chaperone protein HtpG"/>
    <property type="match status" value="1"/>
</dbReference>
<dbReference type="FunFam" id="3.40.50.11260:FF:000008">
    <property type="entry name" value="Chaperone protein HtpG"/>
    <property type="match status" value="1"/>
</dbReference>
<dbReference type="FunFam" id="3.30.230.80:FF:000002">
    <property type="entry name" value="Molecular chaperone HtpG"/>
    <property type="match status" value="1"/>
</dbReference>
<dbReference type="FunFam" id="3.30.565.10:FF:000009">
    <property type="entry name" value="Molecular chaperone HtpG"/>
    <property type="match status" value="1"/>
</dbReference>
<dbReference type="Gene3D" id="3.30.230.80">
    <property type="match status" value="1"/>
</dbReference>
<dbReference type="Gene3D" id="3.40.50.11260">
    <property type="match status" value="1"/>
</dbReference>
<dbReference type="Gene3D" id="1.20.120.790">
    <property type="entry name" value="Heat shock protein 90, C-terminal domain"/>
    <property type="match status" value="1"/>
</dbReference>
<dbReference type="Gene3D" id="3.30.565.10">
    <property type="entry name" value="Histidine kinase-like ATPase, C-terminal domain"/>
    <property type="match status" value="1"/>
</dbReference>
<dbReference type="HAMAP" id="MF_00505">
    <property type="entry name" value="HSP90"/>
    <property type="match status" value="1"/>
</dbReference>
<dbReference type="InterPro" id="IPR036890">
    <property type="entry name" value="HATPase_C_sf"/>
</dbReference>
<dbReference type="InterPro" id="IPR019805">
    <property type="entry name" value="Heat_shock_protein_90_CS"/>
</dbReference>
<dbReference type="InterPro" id="IPR037196">
    <property type="entry name" value="HSP90_C"/>
</dbReference>
<dbReference type="InterPro" id="IPR001404">
    <property type="entry name" value="Hsp90_fam"/>
</dbReference>
<dbReference type="InterPro" id="IPR020575">
    <property type="entry name" value="Hsp90_N"/>
</dbReference>
<dbReference type="InterPro" id="IPR020568">
    <property type="entry name" value="Ribosomal_Su5_D2-typ_SF"/>
</dbReference>
<dbReference type="NCBIfam" id="NF003555">
    <property type="entry name" value="PRK05218.1"/>
    <property type="match status" value="1"/>
</dbReference>
<dbReference type="PANTHER" id="PTHR11528">
    <property type="entry name" value="HEAT SHOCK PROTEIN 90 FAMILY MEMBER"/>
    <property type="match status" value="1"/>
</dbReference>
<dbReference type="Pfam" id="PF13589">
    <property type="entry name" value="HATPase_c_3"/>
    <property type="match status" value="1"/>
</dbReference>
<dbReference type="Pfam" id="PF00183">
    <property type="entry name" value="HSP90"/>
    <property type="match status" value="2"/>
</dbReference>
<dbReference type="PIRSF" id="PIRSF002583">
    <property type="entry name" value="Hsp90"/>
    <property type="match status" value="1"/>
</dbReference>
<dbReference type="PRINTS" id="PR00775">
    <property type="entry name" value="HEATSHOCK90"/>
</dbReference>
<dbReference type="SMART" id="SM00387">
    <property type="entry name" value="HATPase_c"/>
    <property type="match status" value="1"/>
</dbReference>
<dbReference type="SUPFAM" id="SSF55874">
    <property type="entry name" value="ATPase domain of HSP90 chaperone/DNA topoisomerase II/histidine kinase"/>
    <property type="match status" value="1"/>
</dbReference>
<dbReference type="SUPFAM" id="SSF110942">
    <property type="entry name" value="HSP90 C-terminal domain"/>
    <property type="match status" value="1"/>
</dbReference>
<dbReference type="SUPFAM" id="SSF54211">
    <property type="entry name" value="Ribosomal protein S5 domain 2-like"/>
    <property type="match status" value="1"/>
</dbReference>
<dbReference type="PROSITE" id="PS00298">
    <property type="entry name" value="HSP90"/>
    <property type="match status" value="1"/>
</dbReference>
<name>HTPG_BACVZ</name>
<comment type="function">
    <text evidence="1">Molecular chaperone. Has ATPase activity.</text>
</comment>
<comment type="subunit">
    <text evidence="1">Homodimer.</text>
</comment>
<comment type="subcellular location">
    <subcellularLocation>
        <location evidence="1">Cytoplasm</location>
    </subcellularLocation>
</comment>
<comment type="similarity">
    <text evidence="1">Belongs to the heat shock protein 90 family.</text>
</comment>